<gene>
    <name evidence="1" type="primary">rpmJ</name>
    <name type="ordered locus">RPD_1398</name>
</gene>
<reference key="1">
    <citation type="submission" date="2006-03" db="EMBL/GenBank/DDBJ databases">
        <title>Complete sequence of Rhodopseudomonas palustris BisB5.</title>
        <authorList>
            <consortium name="US DOE Joint Genome Institute"/>
            <person name="Copeland A."/>
            <person name="Lucas S."/>
            <person name="Lapidus A."/>
            <person name="Barry K."/>
            <person name="Detter J.C."/>
            <person name="Glavina del Rio T."/>
            <person name="Hammon N."/>
            <person name="Israni S."/>
            <person name="Dalin E."/>
            <person name="Tice H."/>
            <person name="Pitluck S."/>
            <person name="Chain P."/>
            <person name="Malfatti S."/>
            <person name="Shin M."/>
            <person name="Vergez L."/>
            <person name="Schmutz J."/>
            <person name="Larimer F."/>
            <person name="Land M."/>
            <person name="Hauser L."/>
            <person name="Pelletier D.A."/>
            <person name="Kyrpides N."/>
            <person name="Lykidis A."/>
            <person name="Oda Y."/>
            <person name="Harwood C.S."/>
            <person name="Richardson P."/>
        </authorList>
    </citation>
    <scope>NUCLEOTIDE SEQUENCE [LARGE SCALE GENOMIC DNA]</scope>
    <source>
        <strain>BisB5</strain>
    </source>
</reference>
<name>RL36_RHOPS</name>
<accession>Q13BA4</accession>
<protein>
    <recommendedName>
        <fullName evidence="1">Large ribosomal subunit protein bL36</fullName>
    </recommendedName>
    <alternativeName>
        <fullName evidence="2">50S ribosomal protein L36</fullName>
    </alternativeName>
</protein>
<sequence>MKVRNSLKSLRSRHRDNRLVRRKGRIYVINKVQRRFKARQG</sequence>
<keyword id="KW-0687">Ribonucleoprotein</keyword>
<keyword id="KW-0689">Ribosomal protein</keyword>
<evidence type="ECO:0000255" key="1">
    <source>
        <dbReference type="HAMAP-Rule" id="MF_00251"/>
    </source>
</evidence>
<evidence type="ECO:0000305" key="2"/>
<comment type="similarity">
    <text evidence="1">Belongs to the bacterial ribosomal protein bL36 family.</text>
</comment>
<proteinExistence type="inferred from homology"/>
<feature type="chain" id="PRO_0000302285" description="Large ribosomal subunit protein bL36">
    <location>
        <begin position="1"/>
        <end position="41"/>
    </location>
</feature>
<dbReference type="EMBL" id="CP000283">
    <property type="protein sequence ID" value="ABE38635.1"/>
    <property type="molecule type" value="Genomic_DNA"/>
</dbReference>
<dbReference type="SMR" id="Q13BA4"/>
<dbReference type="STRING" id="316057.RPD_1398"/>
<dbReference type="KEGG" id="rpd:RPD_1398"/>
<dbReference type="eggNOG" id="COG0257">
    <property type="taxonomic scope" value="Bacteria"/>
</dbReference>
<dbReference type="HOGENOM" id="CLU_135723_3_0_5"/>
<dbReference type="BioCyc" id="RPAL316057:RPD_RS07060-MONOMER"/>
<dbReference type="Proteomes" id="UP000001818">
    <property type="component" value="Chromosome"/>
</dbReference>
<dbReference type="GO" id="GO:1990904">
    <property type="term" value="C:ribonucleoprotein complex"/>
    <property type="evidence" value="ECO:0007669"/>
    <property type="project" value="UniProtKB-KW"/>
</dbReference>
<dbReference type="GO" id="GO:0005840">
    <property type="term" value="C:ribosome"/>
    <property type="evidence" value="ECO:0007669"/>
    <property type="project" value="UniProtKB-KW"/>
</dbReference>
<dbReference type="GO" id="GO:0003735">
    <property type="term" value="F:structural constituent of ribosome"/>
    <property type="evidence" value="ECO:0007669"/>
    <property type="project" value="InterPro"/>
</dbReference>
<dbReference type="GO" id="GO:0006412">
    <property type="term" value="P:translation"/>
    <property type="evidence" value="ECO:0007669"/>
    <property type="project" value="UniProtKB-UniRule"/>
</dbReference>
<dbReference type="HAMAP" id="MF_00251">
    <property type="entry name" value="Ribosomal_bL36"/>
    <property type="match status" value="1"/>
</dbReference>
<dbReference type="InterPro" id="IPR000473">
    <property type="entry name" value="Ribosomal_bL36"/>
</dbReference>
<dbReference type="InterPro" id="IPR035977">
    <property type="entry name" value="Ribosomal_bL36_sp"/>
</dbReference>
<dbReference type="InterPro" id="IPR047621">
    <property type="entry name" value="Ribosomal_L36_bact"/>
</dbReference>
<dbReference type="NCBIfam" id="NF002021">
    <property type="entry name" value="PRK00831.1"/>
    <property type="match status" value="1"/>
</dbReference>
<dbReference type="NCBIfam" id="TIGR01022">
    <property type="entry name" value="rpmJ_bact"/>
    <property type="match status" value="1"/>
</dbReference>
<dbReference type="PANTHER" id="PTHR47781">
    <property type="entry name" value="50S RIBOSOMAL PROTEIN L36 2"/>
    <property type="match status" value="1"/>
</dbReference>
<dbReference type="PANTHER" id="PTHR47781:SF1">
    <property type="entry name" value="LARGE RIBOSOMAL SUBUNIT PROTEIN BL36B"/>
    <property type="match status" value="1"/>
</dbReference>
<dbReference type="Pfam" id="PF00444">
    <property type="entry name" value="Ribosomal_L36"/>
    <property type="match status" value="1"/>
</dbReference>
<dbReference type="SUPFAM" id="SSF57840">
    <property type="entry name" value="Ribosomal protein L36"/>
    <property type="match status" value="1"/>
</dbReference>
<dbReference type="PROSITE" id="PS00828">
    <property type="entry name" value="RIBOSOMAL_L36"/>
    <property type="match status" value="1"/>
</dbReference>
<organism>
    <name type="scientific">Rhodopseudomonas palustris (strain BisB5)</name>
    <dbReference type="NCBI Taxonomy" id="316057"/>
    <lineage>
        <taxon>Bacteria</taxon>
        <taxon>Pseudomonadati</taxon>
        <taxon>Pseudomonadota</taxon>
        <taxon>Alphaproteobacteria</taxon>
        <taxon>Hyphomicrobiales</taxon>
        <taxon>Nitrobacteraceae</taxon>
        <taxon>Rhodopseudomonas</taxon>
    </lineage>
</organism>